<keyword id="KW-1043">Host membrane</keyword>
<keyword id="KW-0472">Membrane</keyword>
<keyword id="KW-1185">Reference proteome</keyword>
<keyword id="KW-0732">Signal</keyword>
<keyword id="KW-0812">Transmembrane</keyword>
<keyword id="KW-1133">Transmembrane helix</keyword>
<name>UL124_HCMVM</name>
<proteinExistence type="inferred from homology"/>
<evidence type="ECO:0000255" key="1"/>
<evidence type="ECO:0000256" key="2">
    <source>
        <dbReference type="SAM" id="MobiDB-lite"/>
    </source>
</evidence>
<evidence type="ECO:0000305" key="3"/>
<feature type="signal peptide" evidence="1">
    <location>
        <begin position="1"/>
        <end position="20"/>
    </location>
</feature>
<feature type="chain" id="PRO_0000418278" description="Uncharacterized protein UL124">
    <location>
        <begin position="21"/>
        <end position="150"/>
    </location>
</feature>
<feature type="transmembrane region" description="Helical" evidence="1">
    <location>
        <begin position="83"/>
        <end position="103"/>
    </location>
</feature>
<feature type="region of interest" description="Disordered" evidence="2">
    <location>
        <begin position="27"/>
        <end position="54"/>
    </location>
</feature>
<feature type="region of interest" description="Disordered" evidence="2">
    <location>
        <begin position="108"/>
        <end position="138"/>
    </location>
</feature>
<feature type="compositionally biased region" description="Polar residues" evidence="2">
    <location>
        <begin position="32"/>
        <end position="49"/>
    </location>
</feature>
<organism>
    <name type="scientific">Human cytomegalovirus (strain Merlin)</name>
    <name type="common">HHV-5</name>
    <name type="synonym">Human herpesvirus 5</name>
    <dbReference type="NCBI Taxonomy" id="295027"/>
    <lineage>
        <taxon>Viruses</taxon>
        <taxon>Duplodnaviria</taxon>
        <taxon>Heunggongvirae</taxon>
        <taxon>Peploviricota</taxon>
        <taxon>Herviviricetes</taxon>
        <taxon>Herpesvirales</taxon>
        <taxon>Orthoherpesviridae</taxon>
        <taxon>Betaherpesvirinae</taxon>
        <taxon>Cytomegalovirus</taxon>
        <taxon>Cytomegalovirus humanbeta5</taxon>
        <taxon>Human cytomegalovirus</taxon>
    </lineage>
</organism>
<comment type="subcellular location">
    <subcellularLocation>
        <location evidence="3">Host membrane</location>
        <topology evidence="3">Single-pass membrane protein</topology>
    </subcellularLocation>
</comment>
<comment type="similarity">
    <text evidence="3">Belongs to the HHV-5 UL124 protein family.</text>
</comment>
<dbReference type="EMBL" id="AY446894">
    <property type="protein sequence ID" value="AAR31667.1"/>
    <property type="molecule type" value="Genomic_DNA"/>
</dbReference>
<dbReference type="RefSeq" id="YP_081563.1">
    <property type="nucleotide sequence ID" value="NC_006273.2"/>
</dbReference>
<dbReference type="DNASU" id="3077503"/>
<dbReference type="GeneID" id="3077503"/>
<dbReference type="KEGG" id="vg:3077503"/>
<dbReference type="Reactome" id="R-HSA-9609690">
    <property type="pathway name" value="HCMV Early Events"/>
</dbReference>
<dbReference type="Proteomes" id="UP000000938">
    <property type="component" value="Segment"/>
</dbReference>
<dbReference type="GO" id="GO:0033644">
    <property type="term" value="C:host cell membrane"/>
    <property type="evidence" value="ECO:0007669"/>
    <property type="project" value="UniProtKB-SubCell"/>
</dbReference>
<dbReference type="GO" id="GO:0016020">
    <property type="term" value="C:membrane"/>
    <property type="evidence" value="ECO:0007669"/>
    <property type="project" value="UniProtKB-KW"/>
</dbReference>
<dbReference type="InterPro" id="IPR020214">
    <property type="entry name" value="Cytomega_UL124"/>
</dbReference>
<dbReference type="Pfam" id="PF17609">
    <property type="entry name" value="HCMV_UL124"/>
    <property type="match status" value="1"/>
</dbReference>
<accession>F5HHS3</accession>
<gene>
    <name type="primary">UL124</name>
</gene>
<sequence>MERNSLLVCQLLCLVARAAATSTAQTTLPSTVNSTATGVTSDSQQNTTQLPASSAAALSLPSASAVQAHSPSSFSDTYPTATALCGTLVVVGIVLCLSLASTVRSKELPSDHEPLEAWEQGSDVEAPPLPEKSPCPEHVPEIRVEIPRYV</sequence>
<reference key="1">
    <citation type="journal article" date="2004" name="J. Gen. Virol.">
        <title>Genetic content of wild-type human cytomegalovirus.</title>
        <authorList>
            <person name="Dolan A."/>
            <person name="Cunningham C."/>
            <person name="Hector R.D."/>
            <person name="Hassan-Walker A.F."/>
            <person name="Lee L."/>
            <person name="Addison C."/>
            <person name="Dargan D.J."/>
            <person name="McGeoch D.J."/>
            <person name="Gatherer D."/>
            <person name="Emery V.C."/>
            <person name="Griffiths P.D."/>
            <person name="Sinzger C."/>
            <person name="McSharry B.P."/>
            <person name="Wilkinson G.W.G."/>
            <person name="Davison A.J."/>
        </authorList>
    </citation>
    <scope>NUCLEOTIDE SEQUENCE [LARGE SCALE GENOMIC DNA]</scope>
</reference>
<protein>
    <recommendedName>
        <fullName>Uncharacterized protein UL124</fullName>
    </recommendedName>
</protein>
<organismHost>
    <name type="scientific">Homo sapiens</name>
    <name type="common">Human</name>
    <dbReference type="NCBI Taxonomy" id="9606"/>
</organismHost>